<protein>
    <recommendedName>
        <fullName evidence="1">Large ribosomal subunit protein uL30</fullName>
    </recommendedName>
    <alternativeName>
        <fullName evidence="2">50S ribosomal protein L30</fullName>
    </alternativeName>
</protein>
<proteinExistence type="inferred from homology"/>
<dbReference type="EMBL" id="AE001437">
    <property type="protein sequence ID" value="AAK81054.1"/>
    <property type="molecule type" value="Genomic_DNA"/>
</dbReference>
<dbReference type="PIR" id="C97283">
    <property type="entry name" value="C97283"/>
</dbReference>
<dbReference type="RefSeq" id="NP_349714.1">
    <property type="nucleotide sequence ID" value="NC_003030.1"/>
</dbReference>
<dbReference type="RefSeq" id="WP_010966394.1">
    <property type="nucleotide sequence ID" value="NC_003030.1"/>
</dbReference>
<dbReference type="SMR" id="Q97EJ6"/>
<dbReference type="STRING" id="272562.CA_C3115"/>
<dbReference type="GeneID" id="44999602"/>
<dbReference type="KEGG" id="cac:CA_C3115"/>
<dbReference type="PATRIC" id="fig|272562.8.peg.3298"/>
<dbReference type="eggNOG" id="COG1841">
    <property type="taxonomic scope" value="Bacteria"/>
</dbReference>
<dbReference type="HOGENOM" id="CLU_131047_1_3_9"/>
<dbReference type="OrthoDB" id="9812790at2"/>
<dbReference type="Proteomes" id="UP000000814">
    <property type="component" value="Chromosome"/>
</dbReference>
<dbReference type="GO" id="GO:0022625">
    <property type="term" value="C:cytosolic large ribosomal subunit"/>
    <property type="evidence" value="ECO:0007669"/>
    <property type="project" value="TreeGrafter"/>
</dbReference>
<dbReference type="GO" id="GO:0003735">
    <property type="term" value="F:structural constituent of ribosome"/>
    <property type="evidence" value="ECO:0007669"/>
    <property type="project" value="InterPro"/>
</dbReference>
<dbReference type="GO" id="GO:0006412">
    <property type="term" value="P:translation"/>
    <property type="evidence" value="ECO:0007669"/>
    <property type="project" value="UniProtKB-UniRule"/>
</dbReference>
<dbReference type="CDD" id="cd01658">
    <property type="entry name" value="Ribosomal_L30"/>
    <property type="match status" value="1"/>
</dbReference>
<dbReference type="FunFam" id="3.30.1390.20:FF:000001">
    <property type="entry name" value="50S ribosomal protein L30"/>
    <property type="match status" value="1"/>
</dbReference>
<dbReference type="Gene3D" id="3.30.1390.20">
    <property type="entry name" value="Ribosomal protein L30, ferredoxin-like fold domain"/>
    <property type="match status" value="1"/>
</dbReference>
<dbReference type="HAMAP" id="MF_01371_B">
    <property type="entry name" value="Ribosomal_uL30_B"/>
    <property type="match status" value="1"/>
</dbReference>
<dbReference type="InterPro" id="IPR036919">
    <property type="entry name" value="Ribo_uL30_ferredoxin-like_sf"/>
</dbReference>
<dbReference type="InterPro" id="IPR005996">
    <property type="entry name" value="Ribosomal_uL30_bac-type"/>
</dbReference>
<dbReference type="InterPro" id="IPR016082">
    <property type="entry name" value="Ribosomal_uL30_ferredoxin-like"/>
</dbReference>
<dbReference type="NCBIfam" id="TIGR01308">
    <property type="entry name" value="rpmD_bact"/>
    <property type="match status" value="1"/>
</dbReference>
<dbReference type="PANTHER" id="PTHR15892:SF2">
    <property type="entry name" value="LARGE RIBOSOMAL SUBUNIT PROTEIN UL30M"/>
    <property type="match status" value="1"/>
</dbReference>
<dbReference type="PANTHER" id="PTHR15892">
    <property type="entry name" value="MITOCHONDRIAL RIBOSOMAL PROTEIN L30"/>
    <property type="match status" value="1"/>
</dbReference>
<dbReference type="Pfam" id="PF00327">
    <property type="entry name" value="Ribosomal_L30"/>
    <property type="match status" value="1"/>
</dbReference>
<dbReference type="PIRSF" id="PIRSF002211">
    <property type="entry name" value="Ribosomal_L30_bac-type"/>
    <property type="match status" value="1"/>
</dbReference>
<dbReference type="SUPFAM" id="SSF55129">
    <property type="entry name" value="Ribosomal protein L30p/L7e"/>
    <property type="match status" value="1"/>
</dbReference>
<evidence type="ECO:0000255" key="1">
    <source>
        <dbReference type="HAMAP-Rule" id="MF_01371"/>
    </source>
</evidence>
<evidence type="ECO:0000305" key="2"/>
<keyword id="KW-1185">Reference proteome</keyword>
<keyword id="KW-0687">Ribonucleoprotein</keyword>
<keyword id="KW-0689">Ribosomal protein</keyword>
<feature type="chain" id="PRO_0000273768" description="Large ribosomal subunit protein uL30">
    <location>
        <begin position="1"/>
        <end position="57"/>
    </location>
</feature>
<reference key="1">
    <citation type="journal article" date="2001" name="J. Bacteriol.">
        <title>Genome sequence and comparative analysis of the solvent-producing bacterium Clostridium acetobutylicum.</title>
        <authorList>
            <person name="Noelling J."/>
            <person name="Breton G."/>
            <person name="Omelchenko M.V."/>
            <person name="Makarova K.S."/>
            <person name="Zeng Q."/>
            <person name="Gibson R."/>
            <person name="Lee H.M."/>
            <person name="Dubois J."/>
            <person name="Qiu D."/>
            <person name="Hitti J."/>
            <person name="Wolf Y.I."/>
            <person name="Tatusov R.L."/>
            <person name="Sabathe F."/>
            <person name="Doucette-Stamm L.A."/>
            <person name="Soucaille P."/>
            <person name="Daly M.J."/>
            <person name="Bennett G.N."/>
            <person name="Koonin E.V."/>
            <person name="Smith D.R."/>
        </authorList>
    </citation>
    <scope>NUCLEOTIDE SEQUENCE [LARGE SCALE GENOMIC DNA]</scope>
    <source>
        <strain>ATCC 824 / DSM 792 / JCM 1419 / IAM 19013 / LMG 5710 / NBRC 13948 / NRRL B-527 / VKM B-1787 / 2291 / W</strain>
    </source>
</reference>
<gene>
    <name evidence="1" type="primary">rpmD</name>
    <name type="ordered locus">CA_C3115</name>
</gene>
<name>RL30_CLOAB</name>
<accession>Q97EJ6</accession>
<comment type="subunit">
    <text evidence="1">Part of the 50S ribosomal subunit.</text>
</comment>
<comment type="similarity">
    <text evidence="1">Belongs to the universal ribosomal protein uL30 family.</text>
</comment>
<sequence length="57" mass="6428">MAKISITLKKSLIGRKKDHIATVNALGLKKIGRTVEHEDTPQIRGMIKKVDYLLEVK</sequence>
<organism>
    <name type="scientific">Clostridium acetobutylicum (strain ATCC 824 / DSM 792 / JCM 1419 / IAM 19013 / LMG 5710 / NBRC 13948 / NRRL B-527 / VKM B-1787 / 2291 / W)</name>
    <dbReference type="NCBI Taxonomy" id="272562"/>
    <lineage>
        <taxon>Bacteria</taxon>
        <taxon>Bacillati</taxon>
        <taxon>Bacillota</taxon>
        <taxon>Clostridia</taxon>
        <taxon>Eubacteriales</taxon>
        <taxon>Clostridiaceae</taxon>
        <taxon>Clostridium</taxon>
    </lineage>
</organism>